<reference key="1">
    <citation type="journal article" date="2007" name="J. Biol. Chem.">
        <title>MARCH-XI, a novel transmembrane ubiquitin ligase implicated in ubiquitin-dependent protein sorting in developing spermatids.</title>
        <authorList>
            <person name="Morokuma Y."/>
            <person name="Nakamura N."/>
            <person name="Kato A."/>
            <person name="Notoya M."/>
            <person name="Yamamoto Y."/>
            <person name="Sakai Y."/>
            <person name="Fukuda H."/>
            <person name="Yamashina S."/>
            <person name="Hirata Y."/>
            <person name="Hirose S."/>
        </authorList>
    </citation>
    <scope>NUCLEOTIDE SEQUENCE [MRNA]</scope>
    <scope>FUNCTION</scope>
    <scope>SUBCELLULAR LOCATION</scope>
    <scope>TISSUE SPECIFICITY</scope>
    <scope>INTERACTION WITH AP1M1 AND LIN7A</scope>
    <scope>MUTAGENESIS OF CYS-169; CYS-182; CYS-184; TYR-367 AND VAL-398</scope>
    <source>
        <tissue>Testis</tissue>
    </source>
</reference>
<dbReference type="EC" id="2.3.2.27"/>
<dbReference type="EMBL" id="AB048841">
    <property type="protein sequence ID" value="BAF68985.1"/>
    <property type="molecule type" value="mRNA"/>
</dbReference>
<dbReference type="RefSeq" id="NP_001095298.1">
    <property type="nucleotide sequence ID" value="NM_001101828.1"/>
</dbReference>
<dbReference type="SMR" id="A6P320"/>
<dbReference type="BioGRID" id="270867">
    <property type="interactions" value="3"/>
</dbReference>
<dbReference type="FunCoup" id="A6P320">
    <property type="interactions" value="126"/>
</dbReference>
<dbReference type="STRING" id="10116.ENSRNOP00000035881"/>
<dbReference type="iPTMnet" id="A6P320"/>
<dbReference type="PhosphoSitePlus" id="A6P320"/>
<dbReference type="PaxDb" id="10116-ENSRNOP00000035881"/>
<dbReference type="GeneID" id="499558"/>
<dbReference type="KEGG" id="rno:499558"/>
<dbReference type="UCSC" id="RGD:1559945">
    <property type="organism name" value="rat"/>
</dbReference>
<dbReference type="AGR" id="RGD:1559945"/>
<dbReference type="CTD" id="441061"/>
<dbReference type="RGD" id="1559945">
    <property type="gene designation" value="Marchf11"/>
</dbReference>
<dbReference type="eggNOG" id="KOG1609">
    <property type="taxonomic scope" value="Eukaryota"/>
</dbReference>
<dbReference type="InParanoid" id="A6P320"/>
<dbReference type="OrthoDB" id="264354at2759"/>
<dbReference type="PhylomeDB" id="A6P320"/>
<dbReference type="UniPathway" id="UPA00143"/>
<dbReference type="PRO" id="PR:A6P320"/>
<dbReference type="Proteomes" id="UP000002494">
    <property type="component" value="Unplaced"/>
</dbReference>
<dbReference type="GO" id="GO:0030659">
    <property type="term" value="C:cytoplasmic vesicle membrane"/>
    <property type="evidence" value="ECO:0007669"/>
    <property type="project" value="UniProtKB-SubCell"/>
</dbReference>
<dbReference type="GO" id="GO:0004842">
    <property type="term" value="F:ubiquitin-protein transferase activity"/>
    <property type="evidence" value="ECO:0000318"/>
    <property type="project" value="GO_Central"/>
</dbReference>
<dbReference type="GO" id="GO:0008270">
    <property type="term" value="F:zinc ion binding"/>
    <property type="evidence" value="ECO:0007669"/>
    <property type="project" value="UniProtKB-KW"/>
</dbReference>
<dbReference type="GO" id="GO:0016567">
    <property type="term" value="P:protein ubiquitination"/>
    <property type="evidence" value="ECO:0007669"/>
    <property type="project" value="UniProtKB-UniPathway"/>
</dbReference>
<dbReference type="CDD" id="cd16810">
    <property type="entry name" value="RING_CH-C4HC3_MARCH11"/>
    <property type="match status" value="1"/>
</dbReference>
<dbReference type="Gene3D" id="3.30.40.10">
    <property type="entry name" value="Zinc/RING finger domain, C3HC4 (zinc finger)"/>
    <property type="match status" value="1"/>
</dbReference>
<dbReference type="InterPro" id="IPR047906">
    <property type="entry name" value="MARCHF11_RING_CH-C4HC3"/>
</dbReference>
<dbReference type="InterPro" id="IPR046356">
    <property type="entry name" value="MARCHF4/9/11"/>
</dbReference>
<dbReference type="InterPro" id="IPR011016">
    <property type="entry name" value="Znf_RING-CH"/>
</dbReference>
<dbReference type="InterPro" id="IPR013083">
    <property type="entry name" value="Znf_RING/FYVE/PHD"/>
</dbReference>
<dbReference type="PANTHER" id="PTHR46053">
    <property type="entry name" value="E3 UBIQUITIN-PROTEIN LIGASE MARCH4-LIKE"/>
    <property type="match status" value="1"/>
</dbReference>
<dbReference type="PANTHER" id="PTHR46053:SF1">
    <property type="entry name" value="E3 UBIQUITIN-PROTEIN LIGASE MARCHF11"/>
    <property type="match status" value="1"/>
</dbReference>
<dbReference type="Pfam" id="PF12906">
    <property type="entry name" value="RINGv"/>
    <property type="match status" value="1"/>
</dbReference>
<dbReference type="SMART" id="SM00744">
    <property type="entry name" value="RINGv"/>
    <property type="match status" value="1"/>
</dbReference>
<dbReference type="SUPFAM" id="SSF101447">
    <property type="entry name" value="Formin homology 2 domain (FH2 domain)"/>
    <property type="match status" value="1"/>
</dbReference>
<dbReference type="SUPFAM" id="SSF57850">
    <property type="entry name" value="RING/U-box"/>
    <property type="match status" value="1"/>
</dbReference>
<dbReference type="PROSITE" id="PS51292">
    <property type="entry name" value="ZF_RING_CH"/>
    <property type="match status" value="1"/>
</dbReference>
<sequence length="398" mass="44085">MSDEGSKRGSRADSLEAEPPLPPPPPPPPPGESSLVPTSPRYRPPLPAPLERIVGSGEPPVELAPRRKGEPLPPLPPSRLPGDQEVSAAGDSCEGPRRLPEVKLPEAAAGKGSPAEPEAGACREGERRGTGDQPETRSVYSSRSSSSGGSGDQRSGHQHQHHQPICKICFQGAEQGELLNPCRCDGSVRYTHQLCLLKWISERGSWTCELCCYRYHVTAIKMKQPCQWQSISITLVEKVQMIAVILGSLFLIASVTWLLWSAFSPYAVWQRKDILFQICYGMYGFMDLVCIGLIVHEGAAVYRVFKRWRAVNLHWDVLNYDKATDIEESSRGESSTSRTLWLPLSALRNRNLVHPTQLTSPRFQCGYVLLHLFNRMRAHEDVSEDNGSGEVVMRVTSV</sequence>
<feature type="chain" id="PRO_0000339346" description="E3 ubiquitin-protein ligase MARCHF11">
    <location>
        <begin position="1"/>
        <end position="398"/>
    </location>
</feature>
<feature type="transmembrane region" description="Helical" evidence="1">
    <location>
        <begin position="241"/>
        <end position="261"/>
    </location>
</feature>
<feature type="transmembrane region" description="Helical" evidence="1">
    <location>
        <begin position="274"/>
        <end position="294"/>
    </location>
</feature>
<feature type="zinc finger region" description="RING-CH-type" evidence="2">
    <location>
        <begin position="158"/>
        <end position="218"/>
    </location>
</feature>
<feature type="region of interest" description="Disordered" evidence="3">
    <location>
        <begin position="1"/>
        <end position="158"/>
    </location>
</feature>
<feature type="short sequence motif" description="YXXL motif">
    <location>
        <begin position="367"/>
        <end position="370"/>
    </location>
</feature>
<feature type="short sequence motif" description="PDZ-binding">
    <location>
        <begin position="395"/>
        <end position="398"/>
    </location>
</feature>
<feature type="compositionally biased region" description="Basic and acidic residues" evidence="3">
    <location>
        <begin position="1"/>
        <end position="14"/>
    </location>
</feature>
<feature type="compositionally biased region" description="Pro residues" evidence="3">
    <location>
        <begin position="19"/>
        <end position="31"/>
    </location>
</feature>
<feature type="compositionally biased region" description="Basic and acidic residues" evidence="3">
    <location>
        <begin position="94"/>
        <end position="104"/>
    </location>
</feature>
<feature type="compositionally biased region" description="Basic and acidic residues" evidence="3">
    <location>
        <begin position="121"/>
        <end position="130"/>
    </location>
</feature>
<feature type="binding site" evidence="2">
    <location>
        <position position="166"/>
    </location>
    <ligand>
        <name>Zn(2+)</name>
        <dbReference type="ChEBI" id="CHEBI:29105"/>
        <label>1</label>
    </ligand>
</feature>
<feature type="binding site" evidence="2">
    <location>
        <position position="169"/>
    </location>
    <ligand>
        <name>Zn(2+)</name>
        <dbReference type="ChEBI" id="CHEBI:29105"/>
        <label>1</label>
    </ligand>
</feature>
<feature type="binding site" evidence="2">
    <location>
        <position position="182"/>
    </location>
    <ligand>
        <name>Zn(2+)</name>
        <dbReference type="ChEBI" id="CHEBI:29105"/>
        <label>2</label>
    </ligand>
</feature>
<feature type="binding site" evidence="2">
    <location>
        <position position="184"/>
    </location>
    <ligand>
        <name>Zn(2+)</name>
        <dbReference type="ChEBI" id="CHEBI:29105"/>
        <label>2</label>
    </ligand>
</feature>
<feature type="binding site" evidence="2">
    <location>
        <position position="192"/>
    </location>
    <ligand>
        <name>Zn(2+)</name>
        <dbReference type="ChEBI" id="CHEBI:29105"/>
        <label>1</label>
    </ligand>
</feature>
<feature type="binding site" evidence="2">
    <location>
        <position position="195"/>
    </location>
    <ligand>
        <name>Zn(2+)</name>
        <dbReference type="ChEBI" id="CHEBI:29105"/>
        <label>1</label>
    </ligand>
</feature>
<feature type="binding site" evidence="2">
    <location>
        <position position="208"/>
    </location>
    <ligand>
        <name>Zn(2+)</name>
        <dbReference type="ChEBI" id="CHEBI:29105"/>
        <label>2</label>
    </ligand>
</feature>
<feature type="binding site" evidence="2">
    <location>
        <position position="211"/>
    </location>
    <ligand>
        <name>Zn(2+)</name>
        <dbReference type="ChEBI" id="CHEBI:29105"/>
        <label>2</label>
    </ligand>
</feature>
<feature type="mutagenesis site" description="Abolishes ubiquitin ligase activity; when associated with S-182 and S-184." evidence="4">
    <original>C</original>
    <variation>S</variation>
    <location>
        <position position="169"/>
    </location>
</feature>
<feature type="mutagenesis site" description="Abolishes ubiquitin ligase activity; when associated with S-169 and C-184." evidence="4">
    <original>C</original>
    <variation>S</variation>
    <location>
        <position position="182"/>
    </location>
</feature>
<feature type="mutagenesis site" description="Abolishes ubiquitin ligase activity; when associated with S-169 and C-182." evidence="4">
    <original>C</original>
    <variation>S</variation>
    <location>
        <position position="184"/>
    </location>
</feature>
<feature type="mutagenesis site" description="Abolishes interaction with AP1M1." evidence="4">
    <original>Y</original>
    <variation>A</variation>
    <location>
        <position position="367"/>
    </location>
</feature>
<feature type="mutagenesis site" description="LIN7A." evidence="4">
    <location>
        <position position="398"/>
    </location>
</feature>
<gene>
    <name type="primary">Marchf11</name>
    <name type="synonym">March11</name>
</gene>
<comment type="function">
    <text evidence="4">E3 ubiquitin-protein ligase that mediates polyubiquitination of CD4. E3 ubiquitin ligases accept ubiquitin from an E2 ubiquitin-conjugating enzyme in the form of a thioester and then directly transfer the ubiquitin to targeted substrates. May play a role in ubuquitin-dependent protein sorting in developmenting spermatids.</text>
</comment>
<comment type="catalytic activity">
    <reaction>
        <text>S-ubiquitinyl-[E2 ubiquitin-conjugating enzyme]-L-cysteine + [acceptor protein]-L-lysine = [E2 ubiquitin-conjugating enzyme]-L-cysteine + N(6)-ubiquitinyl-[acceptor protein]-L-lysine.</text>
        <dbReference type="EC" id="2.3.2.27"/>
    </reaction>
</comment>
<comment type="pathway">
    <text>Protein modification; protein ubiquitination.</text>
</comment>
<comment type="subunit">
    <text evidence="4">Interacts (YXXL motif) with AP1M1. Interacts (via PDZ-binding motif) with LIN7A. Interacts with unidentified fucose glycoproteins.</text>
</comment>
<comment type="subcellular location">
    <subcellularLocation>
        <location evidence="4">Cytoplasmic vesicle membrane</location>
        <topology evidence="4">Multi-pass membrane protein</topology>
    </subcellularLocation>
</comment>
<comment type="tissue specificity">
    <text evidence="4">Predominantly expressed in testis. Present in early developing spermatids. Not present in spermatogonia, spermatocytes or somatic cells (i.e. peritubular, Leydig, and Sertoli cells). Present in early round spermatids at step 4, remains until step 11, then it decreases at steps 12-15, and diminishes after step 16 (at protein level). Also expressed at lower level in brain.</text>
</comment>
<comment type="domain">
    <text>The RING-CH-type zinc finger domain is required for E3 ligase activity.</text>
</comment>
<name>MARHB_RAT</name>
<proteinExistence type="evidence at protein level"/>
<organism>
    <name type="scientific">Rattus norvegicus</name>
    <name type="common">Rat</name>
    <dbReference type="NCBI Taxonomy" id="10116"/>
    <lineage>
        <taxon>Eukaryota</taxon>
        <taxon>Metazoa</taxon>
        <taxon>Chordata</taxon>
        <taxon>Craniata</taxon>
        <taxon>Vertebrata</taxon>
        <taxon>Euteleostomi</taxon>
        <taxon>Mammalia</taxon>
        <taxon>Eutheria</taxon>
        <taxon>Euarchontoglires</taxon>
        <taxon>Glires</taxon>
        <taxon>Rodentia</taxon>
        <taxon>Myomorpha</taxon>
        <taxon>Muroidea</taxon>
        <taxon>Muridae</taxon>
        <taxon>Murinae</taxon>
        <taxon>Rattus</taxon>
    </lineage>
</organism>
<protein>
    <recommendedName>
        <fullName>E3 ubiquitin-protein ligase MARCHF11</fullName>
        <ecNumber>2.3.2.27</ecNumber>
    </recommendedName>
    <alternativeName>
        <fullName>Membrane-associated RING finger protein 11</fullName>
    </alternativeName>
    <alternativeName>
        <fullName>Membrane-associated RING-CH protein XI</fullName>
        <shortName>MARCH-XI</shortName>
    </alternativeName>
    <alternativeName>
        <fullName evidence="5">RING-type E3 ubiquitin transferase MARCHF11</fullName>
    </alternativeName>
</protein>
<accession>A6P320</accession>
<evidence type="ECO:0000255" key="1"/>
<evidence type="ECO:0000255" key="2">
    <source>
        <dbReference type="PROSITE-ProRule" id="PRU00623"/>
    </source>
</evidence>
<evidence type="ECO:0000256" key="3">
    <source>
        <dbReference type="SAM" id="MobiDB-lite"/>
    </source>
</evidence>
<evidence type="ECO:0000269" key="4">
    <source>
    </source>
</evidence>
<evidence type="ECO:0000305" key="5"/>
<keyword id="KW-0968">Cytoplasmic vesicle</keyword>
<keyword id="KW-0472">Membrane</keyword>
<keyword id="KW-0479">Metal-binding</keyword>
<keyword id="KW-1185">Reference proteome</keyword>
<keyword id="KW-0808">Transferase</keyword>
<keyword id="KW-0812">Transmembrane</keyword>
<keyword id="KW-1133">Transmembrane helix</keyword>
<keyword id="KW-0833">Ubl conjugation pathway</keyword>
<keyword id="KW-0862">Zinc</keyword>
<keyword id="KW-0863">Zinc-finger</keyword>